<reference key="1">
    <citation type="journal article" date="2011" name="PLoS Genet.">
        <title>Genomic analysis of the necrotrophic fungal pathogens Sclerotinia sclerotiorum and Botrytis cinerea.</title>
        <authorList>
            <person name="Amselem J."/>
            <person name="Cuomo C.A."/>
            <person name="van Kan J.A.L."/>
            <person name="Viaud M."/>
            <person name="Benito E.P."/>
            <person name="Couloux A."/>
            <person name="Coutinho P.M."/>
            <person name="de Vries R.P."/>
            <person name="Dyer P.S."/>
            <person name="Fillinger S."/>
            <person name="Fournier E."/>
            <person name="Gout L."/>
            <person name="Hahn M."/>
            <person name="Kohn L."/>
            <person name="Lapalu N."/>
            <person name="Plummer K.M."/>
            <person name="Pradier J.-M."/>
            <person name="Quevillon E."/>
            <person name="Sharon A."/>
            <person name="Simon A."/>
            <person name="ten Have A."/>
            <person name="Tudzynski B."/>
            <person name="Tudzynski P."/>
            <person name="Wincker P."/>
            <person name="Andrew M."/>
            <person name="Anthouard V."/>
            <person name="Beever R.E."/>
            <person name="Beffa R."/>
            <person name="Benoit I."/>
            <person name="Bouzid O."/>
            <person name="Brault B."/>
            <person name="Chen Z."/>
            <person name="Choquer M."/>
            <person name="Collemare J."/>
            <person name="Cotton P."/>
            <person name="Danchin E.G."/>
            <person name="Da Silva C."/>
            <person name="Gautier A."/>
            <person name="Giraud C."/>
            <person name="Giraud T."/>
            <person name="Gonzalez C."/>
            <person name="Grossetete S."/>
            <person name="Gueldener U."/>
            <person name="Henrissat B."/>
            <person name="Howlett B.J."/>
            <person name="Kodira C."/>
            <person name="Kretschmer M."/>
            <person name="Lappartient A."/>
            <person name="Leroch M."/>
            <person name="Levis C."/>
            <person name="Mauceli E."/>
            <person name="Neuveglise C."/>
            <person name="Oeser B."/>
            <person name="Pearson M."/>
            <person name="Poulain J."/>
            <person name="Poussereau N."/>
            <person name="Quesneville H."/>
            <person name="Rascle C."/>
            <person name="Schumacher J."/>
            <person name="Segurens B."/>
            <person name="Sexton A."/>
            <person name="Silva E."/>
            <person name="Sirven C."/>
            <person name="Soanes D.M."/>
            <person name="Talbot N.J."/>
            <person name="Templeton M."/>
            <person name="Yandava C."/>
            <person name="Yarden O."/>
            <person name="Zeng Q."/>
            <person name="Rollins J.A."/>
            <person name="Lebrun M.-H."/>
            <person name="Dickman M."/>
        </authorList>
    </citation>
    <scope>NUCLEOTIDE SEQUENCE [LARGE SCALE GENOMIC DNA]</scope>
    <source>
        <strain>B05.10</strain>
    </source>
</reference>
<reference key="2">
    <citation type="journal article" date="2012" name="Eukaryot. Cell">
        <title>Genome update of Botrytis cinerea strains B05.10 and T4.</title>
        <authorList>
            <person name="Staats M."/>
            <person name="van Kan J.A.L."/>
        </authorList>
    </citation>
    <scope>NUCLEOTIDE SEQUENCE [LARGE SCALE GENOMIC DNA]</scope>
    <source>
        <strain>B05.10</strain>
    </source>
</reference>
<reference key="3">
    <citation type="journal article" date="2017" name="Mol. Plant Pathol.">
        <title>A gapless genome sequence of the fungus Botrytis cinerea.</title>
        <authorList>
            <person name="van Kan J.A.L."/>
            <person name="Stassen J.H.M."/>
            <person name="Mosbach A."/>
            <person name="van der Lee T.A.J."/>
            <person name="Faino L."/>
            <person name="Farmer A.D."/>
            <person name="Papasotiriou D.G."/>
            <person name="Zhou S."/>
            <person name="Seidl M.F."/>
            <person name="Cottam E."/>
            <person name="Edel D."/>
            <person name="Hahn M."/>
            <person name="Schwartz D.C."/>
            <person name="Dietrich R.A."/>
            <person name="Widdison S."/>
            <person name="Scalliet G."/>
        </authorList>
    </citation>
    <scope>NUCLEOTIDE SEQUENCE [LARGE SCALE GENOMIC DNA]</scope>
    <source>
        <strain>B05.10</strain>
    </source>
</reference>
<reference key="4">
    <citation type="journal article" date="2016" name="New Phytol.">
        <title>Aquaporin8 regulates cellular development and reactive oxygen species production, a critical component of virulence in Botrytis cinerea.</title>
        <authorList>
            <person name="An B."/>
            <person name="Li B."/>
            <person name="Li H."/>
            <person name="Zhang Z."/>
            <person name="Qin G."/>
            <person name="Tian S."/>
        </authorList>
    </citation>
    <scope>FUNCTION</scope>
    <scope>DOMAIN</scope>
    <scope>INDUCTION</scope>
    <scope>DISRUPTION PHENOTYPE</scope>
</reference>
<gene>
    <name evidence="5" type="primary">AQP6</name>
    <name type="ORF">BCIN_04g06710</name>
</gene>
<organism>
    <name type="scientific">Botryotinia fuckeliana (strain B05.10)</name>
    <name type="common">Noble rot fungus</name>
    <name type="synonym">Botrytis cinerea</name>
    <dbReference type="NCBI Taxonomy" id="332648"/>
    <lineage>
        <taxon>Eukaryota</taxon>
        <taxon>Fungi</taxon>
        <taxon>Dikarya</taxon>
        <taxon>Ascomycota</taxon>
        <taxon>Pezizomycotina</taxon>
        <taxon>Leotiomycetes</taxon>
        <taxon>Helotiales</taxon>
        <taxon>Sclerotiniaceae</taxon>
        <taxon>Botrytis</taxon>
    </lineage>
</organism>
<keyword id="KW-0325">Glycoprotein</keyword>
<keyword id="KW-0472">Membrane</keyword>
<keyword id="KW-1185">Reference proteome</keyword>
<keyword id="KW-0677">Repeat</keyword>
<keyword id="KW-0812">Transmembrane</keyword>
<keyword id="KW-1133">Transmembrane helix</keyword>
<keyword id="KW-0813">Transport</keyword>
<feature type="chain" id="PRO_0000457444" description="Aquaporin-5">
    <location>
        <begin position="1"/>
        <end position="540"/>
    </location>
</feature>
<feature type="topological domain" description="Cytoplasmic" evidence="6">
    <location>
        <begin position="1"/>
        <end position="263"/>
    </location>
</feature>
<feature type="transmembrane region" description="Helical" evidence="1">
    <location>
        <begin position="264"/>
        <end position="284"/>
    </location>
</feature>
<feature type="topological domain" description="Extracellular" evidence="6">
    <location>
        <begin position="285"/>
        <end position="308"/>
    </location>
</feature>
<feature type="transmembrane region" description="Helical" evidence="1">
    <location>
        <begin position="309"/>
        <end position="329"/>
    </location>
</feature>
<feature type="topological domain" description="Cytoplasmic" evidence="6">
    <location>
        <begin position="330"/>
        <end position="332"/>
    </location>
</feature>
<feature type="transmembrane region" description="Helical" evidence="1">
    <location>
        <begin position="333"/>
        <end position="353"/>
    </location>
</feature>
<feature type="topological domain" description="Extracellular" evidence="6">
    <location>
        <begin position="354"/>
        <end position="356"/>
    </location>
</feature>
<feature type="transmembrane region" description="Helical" evidence="1">
    <location>
        <begin position="357"/>
        <end position="377"/>
    </location>
</feature>
<feature type="topological domain" description="Cytoplasmic" evidence="6">
    <location>
        <begin position="378"/>
        <end position="393"/>
    </location>
</feature>
<feature type="transmembrane region" description="Helical" evidence="1">
    <location>
        <begin position="394"/>
        <end position="414"/>
    </location>
</feature>
<feature type="topological domain" description="Extracellular" evidence="6">
    <location>
        <begin position="415"/>
        <end position="420"/>
    </location>
</feature>
<feature type="transmembrane region" description="Helical" evidence="1">
    <location>
        <begin position="421"/>
        <end position="441"/>
    </location>
</feature>
<feature type="topological domain" description="Cytoplasmic" evidence="6">
    <location>
        <begin position="442"/>
        <end position="467"/>
    </location>
</feature>
<feature type="transmembrane region" description="Helical" evidence="1">
    <location>
        <begin position="468"/>
        <end position="488"/>
    </location>
</feature>
<feature type="topological domain" description="Extracellular" evidence="6">
    <location>
        <begin position="489"/>
        <end position="540"/>
    </location>
</feature>
<feature type="region of interest" description="Disordered" evidence="3">
    <location>
        <begin position="1"/>
        <end position="224"/>
    </location>
</feature>
<feature type="region of interest" description="Disordered" evidence="3">
    <location>
        <begin position="499"/>
        <end position="540"/>
    </location>
</feature>
<feature type="compositionally biased region" description="Polar residues" evidence="3">
    <location>
        <begin position="25"/>
        <end position="44"/>
    </location>
</feature>
<feature type="compositionally biased region" description="Basic and acidic residues" evidence="3">
    <location>
        <begin position="119"/>
        <end position="133"/>
    </location>
</feature>
<feature type="compositionally biased region" description="Basic and acidic residues" evidence="3">
    <location>
        <begin position="140"/>
        <end position="155"/>
    </location>
</feature>
<feature type="compositionally biased region" description="Basic and acidic residues" evidence="3">
    <location>
        <begin position="174"/>
        <end position="194"/>
    </location>
</feature>
<feature type="compositionally biased region" description="Basic and acidic residues" evidence="3">
    <location>
        <begin position="204"/>
        <end position="214"/>
    </location>
</feature>
<feature type="compositionally biased region" description="Basic and acidic residues" evidence="3">
    <location>
        <begin position="502"/>
        <end position="530"/>
    </location>
</feature>
<feature type="glycosylation site" description="N-linked (GlcNAc...) asparagine" evidence="2">
    <location>
        <position position="296"/>
    </location>
</feature>
<feature type="glycosylation site" description="N-linked (GlcNAc...) asparagine" evidence="2">
    <location>
        <position position="530"/>
    </location>
</feature>
<sequence>MSGEGTDLPTFQSSRTADGDVINRPGSSQQQLVPIAHTISSPSKAYQKDTAMWSPPLSSHPIMSPPDLTPQHPVFSTEDLTRPAAGLRRRPSVPPPRRYSNGDYDPKLSFTSDTGRALRAREDLYYSDRERENSMSSRTRARDDHPHPDYHERSRPPRTYRNVVGWESGPQKSYFDDSSRSDLGKDRDLEKGMREAGAAPEWASGEKVRRKSTDESIDGYNYESHKRNGTKGTIDLNNLTPEERAMVLRLPWTQWMNSNFKNHFVATIGEFVGTTMFLFFAFAGTQVANIDSNTVNTTTGAATGFNIAVQLYIAVIFGFSLMVNVWIFFRISGGLFNPAVTLGMVLVGAIPIPRAACLFFAQILGGIAASGMVLGLFPTTFNVRTTLGASTSTVQGVFIEAILTAELVFTIFMLAKEKHKATFIAPVGIGLALFIAEMVGVYYTGGSLNPARSFGPCVVSGSFDKEHWIYWIGPITGTFIAVFFYKFIKMLEYEMANPGQDGDAKNDPTQNEKKREQILEERNRRYEKRNGSLRPGSRLS</sequence>
<evidence type="ECO:0000255" key="1"/>
<evidence type="ECO:0000255" key="2">
    <source>
        <dbReference type="PROSITE-ProRule" id="PRU00498"/>
    </source>
</evidence>
<evidence type="ECO:0000256" key="3">
    <source>
        <dbReference type="SAM" id="MobiDB-lite"/>
    </source>
</evidence>
<evidence type="ECO:0000269" key="4">
    <source>
    </source>
</evidence>
<evidence type="ECO:0000303" key="5">
    <source>
    </source>
</evidence>
<evidence type="ECO:0000305" key="6"/>
<evidence type="ECO:0000305" key="7">
    <source>
    </source>
</evidence>
<protein>
    <recommendedName>
        <fullName evidence="5">Aquaporin-5</fullName>
    </recommendedName>
</protein>
<comment type="function">
    <text evidence="4 7">Water channel required to facilitate the transport of water across membranes (Probable). May play a role in the vegetative growth (PubMed:26527167).</text>
</comment>
<comment type="catalytic activity">
    <reaction evidence="7">
        <text>H2O(in) = H2O(out)</text>
        <dbReference type="Rhea" id="RHEA:29667"/>
        <dbReference type="ChEBI" id="CHEBI:15377"/>
    </reaction>
</comment>
<comment type="subcellular location">
    <subcellularLocation>
        <location evidence="1">Membrane</location>
        <topology evidence="1">Multi-pass membrane protein</topology>
    </subcellularLocation>
</comment>
<comment type="induction">
    <text evidence="4">Expression is higher in vegetative hyphae than in conidia and infection structures.</text>
</comment>
<comment type="domain">
    <text evidence="7">Aquaporins contain two tandem repeats each containing three membrane-spanning domains and a pore-forming loop with the signature motif Asn-Pro-Ala (NPA).</text>
</comment>
<comment type="disruption phenotype">
    <text evidence="4">Leads to a slight reduction in the vegetative growth rate and delayed conidiation.</text>
</comment>
<comment type="similarity">
    <text evidence="6">Belongs to the MIP/aquaporin (TC 1.A.8) family.</text>
</comment>
<proteinExistence type="evidence at transcript level"/>
<accession>A0A384JGJ4</accession>
<name>AQP6_BOTFB</name>
<dbReference type="EMBL" id="CP009808">
    <property type="protein sequence ID" value="ATZ49537.1"/>
    <property type="molecule type" value="Genomic_DNA"/>
</dbReference>
<dbReference type="SMR" id="A0A384JGJ4"/>
<dbReference type="EnsemblFungi" id="Bcin04g06710.1">
    <property type="protein sequence ID" value="Bcin04p06710.1"/>
    <property type="gene ID" value="Bcin04g06710"/>
</dbReference>
<dbReference type="KEGG" id="bfu:BCIN_04g06710"/>
<dbReference type="VEuPathDB" id="FungiDB:Bcin04g06710"/>
<dbReference type="OMA" id="SRPPRTY"/>
<dbReference type="OrthoDB" id="3222at2759"/>
<dbReference type="Proteomes" id="UP000001798">
    <property type="component" value="Chromosome bcin04"/>
</dbReference>
<dbReference type="GO" id="GO:0005886">
    <property type="term" value="C:plasma membrane"/>
    <property type="evidence" value="ECO:0007669"/>
    <property type="project" value="TreeGrafter"/>
</dbReference>
<dbReference type="GO" id="GO:0015250">
    <property type="term" value="F:water channel activity"/>
    <property type="evidence" value="ECO:0007669"/>
    <property type="project" value="TreeGrafter"/>
</dbReference>
<dbReference type="CDD" id="cd00333">
    <property type="entry name" value="MIP"/>
    <property type="match status" value="1"/>
</dbReference>
<dbReference type="FunFam" id="1.20.1080.10:FF:000024">
    <property type="entry name" value="MIP aquaporin (Eurofung)"/>
    <property type="match status" value="1"/>
</dbReference>
<dbReference type="Gene3D" id="1.20.1080.10">
    <property type="entry name" value="Glycerol uptake facilitator protein"/>
    <property type="match status" value="1"/>
</dbReference>
<dbReference type="InterPro" id="IPR023271">
    <property type="entry name" value="Aquaporin-like"/>
</dbReference>
<dbReference type="InterPro" id="IPR034294">
    <property type="entry name" value="Aquaporin_transptr"/>
</dbReference>
<dbReference type="InterPro" id="IPR000425">
    <property type="entry name" value="MIP"/>
</dbReference>
<dbReference type="PANTHER" id="PTHR19139:SF283">
    <property type="entry name" value="AQUAPORIN"/>
    <property type="match status" value="1"/>
</dbReference>
<dbReference type="PANTHER" id="PTHR19139">
    <property type="entry name" value="AQUAPORIN TRANSPORTER"/>
    <property type="match status" value="1"/>
</dbReference>
<dbReference type="Pfam" id="PF00230">
    <property type="entry name" value="MIP"/>
    <property type="match status" value="1"/>
</dbReference>
<dbReference type="PRINTS" id="PR00783">
    <property type="entry name" value="MINTRINSICP"/>
</dbReference>
<dbReference type="SUPFAM" id="SSF81338">
    <property type="entry name" value="Aquaporin-like"/>
    <property type="match status" value="1"/>
</dbReference>